<accession>Q8ZHF1</accession>
<accession>Q0WI93</accession>
<gene>
    <name evidence="1" type="primary">glsA1</name>
    <name type="ordered locus">YPO0949</name>
    <name type="ordered locus">y3336</name>
    <name type="ordered locus">YP_3492</name>
</gene>
<protein>
    <recommendedName>
        <fullName evidence="1">Glutaminase 1</fullName>
        <ecNumber evidence="1">3.5.1.2</ecNumber>
    </recommendedName>
</protein>
<evidence type="ECO:0000255" key="1">
    <source>
        <dbReference type="HAMAP-Rule" id="MF_00313"/>
    </source>
</evidence>
<organism>
    <name type="scientific">Yersinia pestis</name>
    <dbReference type="NCBI Taxonomy" id="632"/>
    <lineage>
        <taxon>Bacteria</taxon>
        <taxon>Pseudomonadati</taxon>
        <taxon>Pseudomonadota</taxon>
        <taxon>Gammaproteobacteria</taxon>
        <taxon>Enterobacterales</taxon>
        <taxon>Yersiniaceae</taxon>
        <taxon>Yersinia</taxon>
    </lineage>
</organism>
<reference key="1">
    <citation type="journal article" date="2001" name="Nature">
        <title>Genome sequence of Yersinia pestis, the causative agent of plague.</title>
        <authorList>
            <person name="Parkhill J."/>
            <person name="Wren B.W."/>
            <person name="Thomson N.R."/>
            <person name="Titball R.W."/>
            <person name="Holden M.T.G."/>
            <person name="Prentice M.B."/>
            <person name="Sebaihia M."/>
            <person name="James K.D."/>
            <person name="Churcher C.M."/>
            <person name="Mungall K.L."/>
            <person name="Baker S."/>
            <person name="Basham D."/>
            <person name="Bentley S.D."/>
            <person name="Brooks K."/>
            <person name="Cerdeno-Tarraga A.-M."/>
            <person name="Chillingworth T."/>
            <person name="Cronin A."/>
            <person name="Davies R.M."/>
            <person name="Davis P."/>
            <person name="Dougan G."/>
            <person name="Feltwell T."/>
            <person name="Hamlin N."/>
            <person name="Holroyd S."/>
            <person name="Jagels K."/>
            <person name="Karlyshev A.V."/>
            <person name="Leather S."/>
            <person name="Moule S."/>
            <person name="Oyston P.C.F."/>
            <person name="Quail M.A."/>
            <person name="Rutherford K.M."/>
            <person name="Simmonds M."/>
            <person name="Skelton J."/>
            <person name="Stevens K."/>
            <person name="Whitehead S."/>
            <person name="Barrell B.G."/>
        </authorList>
    </citation>
    <scope>NUCLEOTIDE SEQUENCE [LARGE SCALE GENOMIC DNA]</scope>
    <source>
        <strain>CO-92 / Biovar Orientalis</strain>
    </source>
</reference>
<reference key="2">
    <citation type="journal article" date="2002" name="J. Bacteriol.">
        <title>Genome sequence of Yersinia pestis KIM.</title>
        <authorList>
            <person name="Deng W."/>
            <person name="Burland V."/>
            <person name="Plunkett G. III"/>
            <person name="Boutin A."/>
            <person name="Mayhew G.F."/>
            <person name="Liss P."/>
            <person name="Perna N.T."/>
            <person name="Rose D.J."/>
            <person name="Mau B."/>
            <person name="Zhou S."/>
            <person name="Schwartz D.C."/>
            <person name="Fetherston J.D."/>
            <person name="Lindler L.E."/>
            <person name="Brubaker R.R."/>
            <person name="Plano G.V."/>
            <person name="Straley S.C."/>
            <person name="McDonough K.A."/>
            <person name="Nilles M.L."/>
            <person name="Matson J.S."/>
            <person name="Blattner F.R."/>
            <person name="Perry R.D."/>
        </authorList>
    </citation>
    <scope>NUCLEOTIDE SEQUENCE [LARGE SCALE GENOMIC DNA]</scope>
    <source>
        <strain>KIM10+ / Biovar Mediaevalis</strain>
    </source>
</reference>
<reference key="3">
    <citation type="journal article" date="2004" name="DNA Res.">
        <title>Complete genome sequence of Yersinia pestis strain 91001, an isolate avirulent to humans.</title>
        <authorList>
            <person name="Song Y."/>
            <person name="Tong Z."/>
            <person name="Wang J."/>
            <person name="Wang L."/>
            <person name="Guo Z."/>
            <person name="Han Y."/>
            <person name="Zhang J."/>
            <person name="Pei D."/>
            <person name="Zhou D."/>
            <person name="Qin H."/>
            <person name="Pang X."/>
            <person name="Han Y."/>
            <person name="Zhai J."/>
            <person name="Li M."/>
            <person name="Cui B."/>
            <person name="Qi Z."/>
            <person name="Jin L."/>
            <person name="Dai R."/>
            <person name="Chen F."/>
            <person name="Li S."/>
            <person name="Ye C."/>
            <person name="Du Z."/>
            <person name="Lin W."/>
            <person name="Wang J."/>
            <person name="Yu J."/>
            <person name="Yang H."/>
            <person name="Wang J."/>
            <person name="Huang P."/>
            <person name="Yang R."/>
        </authorList>
    </citation>
    <scope>NUCLEOTIDE SEQUENCE [LARGE SCALE GENOMIC DNA]</scope>
    <source>
        <strain>91001 / Biovar Mediaevalis</strain>
    </source>
</reference>
<dbReference type="EC" id="3.5.1.2" evidence="1"/>
<dbReference type="EMBL" id="AL590842">
    <property type="protein sequence ID" value="CAL19615.1"/>
    <property type="molecule type" value="Genomic_DNA"/>
</dbReference>
<dbReference type="EMBL" id="AE009952">
    <property type="protein sequence ID" value="AAM86886.1"/>
    <property type="molecule type" value="Genomic_DNA"/>
</dbReference>
<dbReference type="EMBL" id="AE017042">
    <property type="protein sequence ID" value="AAS63647.1"/>
    <property type="molecule type" value="Genomic_DNA"/>
</dbReference>
<dbReference type="PIR" id="AE0116">
    <property type="entry name" value="AE0116"/>
</dbReference>
<dbReference type="RefSeq" id="YP_002345995.1">
    <property type="nucleotide sequence ID" value="NC_003143.1"/>
</dbReference>
<dbReference type="SMR" id="Q8ZHF1"/>
<dbReference type="IntAct" id="Q8ZHF1">
    <property type="interactions" value="5"/>
</dbReference>
<dbReference type="STRING" id="214092.YPO0949"/>
<dbReference type="PaxDb" id="214092-YPO0949"/>
<dbReference type="DNASU" id="1148283"/>
<dbReference type="EnsemblBacteria" id="AAS63647">
    <property type="protein sequence ID" value="AAS63647"/>
    <property type="gene ID" value="YP_3492"/>
</dbReference>
<dbReference type="KEGG" id="ype:YPO0949"/>
<dbReference type="KEGG" id="ypk:y3336"/>
<dbReference type="KEGG" id="ypm:YP_3492"/>
<dbReference type="PATRIC" id="fig|214092.21.peg.1228"/>
<dbReference type="eggNOG" id="COG2066">
    <property type="taxonomic scope" value="Bacteria"/>
</dbReference>
<dbReference type="HOGENOM" id="CLU_027932_1_1_6"/>
<dbReference type="OMA" id="RPRNPFI"/>
<dbReference type="OrthoDB" id="9788822at2"/>
<dbReference type="Proteomes" id="UP000000815">
    <property type="component" value="Chromosome"/>
</dbReference>
<dbReference type="Proteomes" id="UP000001019">
    <property type="component" value="Chromosome"/>
</dbReference>
<dbReference type="Proteomes" id="UP000002490">
    <property type="component" value="Chromosome"/>
</dbReference>
<dbReference type="GO" id="GO:0004359">
    <property type="term" value="F:glutaminase activity"/>
    <property type="evidence" value="ECO:0000318"/>
    <property type="project" value="GO_Central"/>
</dbReference>
<dbReference type="GO" id="GO:0006537">
    <property type="term" value="P:glutamate biosynthetic process"/>
    <property type="evidence" value="ECO:0000318"/>
    <property type="project" value="GO_Central"/>
</dbReference>
<dbReference type="GO" id="GO:0006543">
    <property type="term" value="P:glutamine catabolic process"/>
    <property type="evidence" value="ECO:0000318"/>
    <property type="project" value="GO_Central"/>
</dbReference>
<dbReference type="FunFam" id="3.40.710.10:FF:000005">
    <property type="entry name" value="Glutaminase"/>
    <property type="match status" value="1"/>
</dbReference>
<dbReference type="Gene3D" id="3.40.710.10">
    <property type="entry name" value="DD-peptidase/beta-lactamase superfamily"/>
    <property type="match status" value="1"/>
</dbReference>
<dbReference type="HAMAP" id="MF_00313">
    <property type="entry name" value="Glutaminase"/>
    <property type="match status" value="1"/>
</dbReference>
<dbReference type="InterPro" id="IPR012338">
    <property type="entry name" value="Beta-lactam/transpept-like"/>
</dbReference>
<dbReference type="InterPro" id="IPR015868">
    <property type="entry name" value="Glutaminase"/>
</dbReference>
<dbReference type="NCBIfam" id="TIGR03814">
    <property type="entry name" value="Gln_ase"/>
    <property type="match status" value="1"/>
</dbReference>
<dbReference type="NCBIfam" id="NF002132">
    <property type="entry name" value="PRK00971.1-1"/>
    <property type="match status" value="1"/>
</dbReference>
<dbReference type="NCBIfam" id="NF002133">
    <property type="entry name" value="PRK00971.1-2"/>
    <property type="match status" value="1"/>
</dbReference>
<dbReference type="PANTHER" id="PTHR12544">
    <property type="entry name" value="GLUTAMINASE"/>
    <property type="match status" value="1"/>
</dbReference>
<dbReference type="PANTHER" id="PTHR12544:SF29">
    <property type="entry name" value="GLUTAMINASE"/>
    <property type="match status" value="1"/>
</dbReference>
<dbReference type="Pfam" id="PF04960">
    <property type="entry name" value="Glutaminase"/>
    <property type="match status" value="1"/>
</dbReference>
<dbReference type="SUPFAM" id="SSF56601">
    <property type="entry name" value="beta-lactamase/transpeptidase-like"/>
    <property type="match status" value="1"/>
</dbReference>
<proteinExistence type="inferred from homology"/>
<feature type="chain" id="PRO_0000110633" description="Glutaminase 1">
    <location>
        <begin position="1"/>
        <end position="308"/>
    </location>
</feature>
<feature type="binding site" evidence="1">
    <location>
        <position position="66"/>
    </location>
    <ligand>
        <name>substrate</name>
    </ligand>
</feature>
<feature type="binding site" evidence="1">
    <location>
        <position position="117"/>
    </location>
    <ligand>
        <name>substrate</name>
    </ligand>
</feature>
<feature type="binding site" evidence="1">
    <location>
        <position position="161"/>
    </location>
    <ligand>
        <name>substrate</name>
    </ligand>
</feature>
<feature type="binding site" evidence="1">
    <location>
        <position position="168"/>
    </location>
    <ligand>
        <name>substrate</name>
    </ligand>
</feature>
<feature type="binding site" evidence="1">
    <location>
        <position position="192"/>
    </location>
    <ligand>
        <name>substrate</name>
    </ligand>
</feature>
<feature type="binding site" evidence="1">
    <location>
        <position position="244"/>
    </location>
    <ligand>
        <name>substrate</name>
    </ligand>
</feature>
<feature type="binding site" evidence="1">
    <location>
        <position position="262"/>
    </location>
    <ligand>
        <name>substrate</name>
    </ligand>
</feature>
<comment type="catalytic activity">
    <reaction evidence="1">
        <text>L-glutamine + H2O = L-glutamate + NH4(+)</text>
        <dbReference type="Rhea" id="RHEA:15889"/>
        <dbReference type="ChEBI" id="CHEBI:15377"/>
        <dbReference type="ChEBI" id="CHEBI:28938"/>
        <dbReference type="ChEBI" id="CHEBI:29985"/>
        <dbReference type="ChEBI" id="CHEBI:58359"/>
        <dbReference type="EC" id="3.5.1.2"/>
    </reaction>
</comment>
<comment type="subunit">
    <text evidence="1">Homotetramer.</text>
</comment>
<comment type="similarity">
    <text evidence="1">Belongs to the glutaminase family.</text>
</comment>
<sequence length="308" mass="33700">MVTTLDNALLNDILQQVRPLIGQGKVADYIPALAEVPANKLGIAVCTLDGQIFQAGDADERFSIQSISKVLSLTLALSRYSEQDIWQRVGKEPSGQPFNSLVQLELEKGKPRNPFINLGALVVCDMLQSRLSAPKQRLLEVVRQLVKDDSISYDPRVARSEFEHSDRNAAIAYLMKSFGNFDNDVLTVLQTYFHYCAMRMSCVELARCFVYLANQGRSISGSESLITPMQARQINALMITSGMYDGAGEFAFRVGMPGKSGVGGGIIAIVPDEFCIAVWSPELDHAGNSLAGTAALERLAQQMGRSIF</sequence>
<name>GLSA1_YERPE</name>
<keyword id="KW-0378">Hydrolase</keyword>
<keyword id="KW-1185">Reference proteome</keyword>